<sequence>MQKALSFLKPYSLLAGIALILMLTELAVELMQPLLIAKIIDDGILKQDLRHVWIWGTVMIGLTVLSFAAGMLNSFYAAHVSQSFSYDTRKGLFQKIQSFSYSTFGQFSSSSYITRLTNDVTQVQNMIFMSLRFMLRAPLMIAGGIVLSLAVNVKLGFFLLVTIPILILFLLWVLRKGGALFRSVQKRLDQVNTIMQENLIAIKLIKALLRGSHEVKRFIKANTRLMEKTVSAFQLVEFTMPVLMLLMNLCILLILWAGSYSITSGSTQVGDVVAIINYATRITGALSMFPFLIMIFTRAKASGDRIGEVLETEGDEREEGTISDRLSGRIEFQHVSFRYPEMDREALRNVSFSAKPRETIAILGATGSGKSTLFQLIPRLYQPDSGRIYIDEKPVQDIPAEGLRRQIGYVPQEVLLFSGTIKENIAWGKENASLDEIMDAAKLAQIHETILKLPNGYDTVLGQRGVNLSGGQKQRISIARALIRKPAILLLDDSTSALDLQTEAKLLEAISTYHCTTLIITQKITTAMKADQILLLEDGELIEKGTHSELLSESQLYKRIYESQFGREGSESC</sequence>
<organism>
    <name type="scientific">Bacillus subtilis (strain 168)</name>
    <dbReference type="NCBI Taxonomy" id="224308"/>
    <lineage>
        <taxon>Bacteria</taxon>
        <taxon>Bacillati</taxon>
        <taxon>Bacillota</taxon>
        <taxon>Bacilli</taxon>
        <taxon>Bacillales</taxon>
        <taxon>Bacillaceae</taxon>
        <taxon>Bacillus</taxon>
    </lineage>
</organism>
<name>YFIB_BACSU</name>
<protein>
    <recommendedName>
        <fullName>Uncharacterized ABC transporter ATP-binding protein YfiB</fullName>
    </recommendedName>
</protein>
<keyword id="KW-0067">ATP-binding</keyword>
<keyword id="KW-1003">Cell membrane</keyword>
<keyword id="KW-0472">Membrane</keyword>
<keyword id="KW-0547">Nucleotide-binding</keyword>
<keyword id="KW-1185">Reference proteome</keyword>
<keyword id="KW-0812">Transmembrane</keyword>
<keyword id="KW-1133">Transmembrane helix</keyword>
<keyword id="KW-0813">Transport</keyword>
<proteinExistence type="inferred from homology"/>
<comment type="subcellular location">
    <subcellularLocation>
        <location evidence="3">Cell membrane</location>
        <topology evidence="2">Multi-pass membrane protein</topology>
    </subcellularLocation>
</comment>
<comment type="similarity">
    <text evidence="3">Belongs to the ABC transporter superfamily.</text>
</comment>
<evidence type="ECO:0000255" key="1">
    <source>
        <dbReference type="PROSITE-ProRule" id="PRU00434"/>
    </source>
</evidence>
<evidence type="ECO:0000255" key="2">
    <source>
        <dbReference type="PROSITE-ProRule" id="PRU00441"/>
    </source>
</evidence>
<evidence type="ECO:0000305" key="3"/>
<dbReference type="EMBL" id="D50543">
    <property type="protein sequence ID" value="BAA09106.1"/>
    <property type="molecule type" value="Genomic_DNA"/>
</dbReference>
<dbReference type="EMBL" id="AL009126">
    <property type="protein sequence ID" value="CAB12650.1"/>
    <property type="molecule type" value="Genomic_DNA"/>
</dbReference>
<dbReference type="PIR" id="E69802">
    <property type="entry name" value="E69802"/>
</dbReference>
<dbReference type="RefSeq" id="NP_388702.1">
    <property type="nucleotide sequence ID" value="NC_000964.3"/>
</dbReference>
<dbReference type="RefSeq" id="WP_003243936.1">
    <property type="nucleotide sequence ID" value="NZ_OZ025638.1"/>
</dbReference>
<dbReference type="SMR" id="P54718"/>
<dbReference type="FunCoup" id="P54718">
    <property type="interactions" value="270"/>
</dbReference>
<dbReference type="STRING" id="224308.BSU08210"/>
<dbReference type="PaxDb" id="224308-BSU08210"/>
<dbReference type="EnsemblBacteria" id="CAB12650">
    <property type="protein sequence ID" value="CAB12650"/>
    <property type="gene ID" value="BSU_08210"/>
</dbReference>
<dbReference type="GeneID" id="936163"/>
<dbReference type="KEGG" id="bsu:BSU08210"/>
<dbReference type="PATRIC" id="fig|224308.179.peg.887"/>
<dbReference type="eggNOG" id="COG1132">
    <property type="taxonomic scope" value="Bacteria"/>
</dbReference>
<dbReference type="InParanoid" id="P54718"/>
<dbReference type="OrthoDB" id="9770415at2"/>
<dbReference type="PhylomeDB" id="P54718"/>
<dbReference type="BioCyc" id="BSUB:BSU08210-MONOMER"/>
<dbReference type="Proteomes" id="UP000001570">
    <property type="component" value="Chromosome"/>
</dbReference>
<dbReference type="GO" id="GO:0005886">
    <property type="term" value="C:plasma membrane"/>
    <property type="evidence" value="ECO:0007669"/>
    <property type="project" value="UniProtKB-SubCell"/>
</dbReference>
<dbReference type="GO" id="GO:0140359">
    <property type="term" value="F:ABC-type transporter activity"/>
    <property type="evidence" value="ECO:0007669"/>
    <property type="project" value="InterPro"/>
</dbReference>
<dbReference type="GO" id="GO:0005524">
    <property type="term" value="F:ATP binding"/>
    <property type="evidence" value="ECO:0007669"/>
    <property type="project" value="UniProtKB-KW"/>
</dbReference>
<dbReference type="GO" id="GO:0016887">
    <property type="term" value="F:ATP hydrolysis activity"/>
    <property type="evidence" value="ECO:0007669"/>
    <property type="project" value="InterPro"/>
</dbReference>
<dbReference type="GO" id="GO:0042626">
    <property type="term" value="F:ATPase-coupled transmembrane transporter activity"/>
    <property type="evidence" value="ECO:0000318"/>
    <property type="project" value="GO_Central"/>
</dbReference>
<dbReference type="GO" id="GO:0055085">
    <property type="term" value="P:transmembrane transport"/>
    <property type="evidence" value="ECO:0000318"/>
    <property type="project" value="GO_Central"/>
</dbReference>
<dbReference type="CDD" id="cd18548">
    <property type="entry name" value="ABC_6TM_Tm287_like"/>
    <property type="match status" value="1"/>
</dbReference>
<dbReference type="FunFam" id="1.20.1560.10:FF:000040">
    <property type="entry name" value="Multidrug ABC transporter ATP-binding protein"/>
    <property type="match status" value="1"/>
</dbReference>
<dbReference type="FunFam" id="3.40.50.300:FF:000221">
    <property type="entry name" value="Multidrug ABC transporter ATP-binding protein"/>
    <property type="match status" value="1"/>
</dbReference>
<dbReference type="Gene3D" id="1.20.1560.10">
    <property type="entry name" value="ABC transporter type 1, transmembrane domain"/>
    <property type="match status" value="1"/>
</dbReference>
<dbReference type="Gene3D" id="3.40.50.300">
    <property type="entry name" value="P-loop containing nucleotide triphosphate hydrolases"/>
    <property type="match status" value="1"/>
</dbReference>
<dbReference type="InterPro" id="IPR003593">
    <property type="entry name" value="AAA+_ATPase"/>
</dbReference>
<dbReference type="InterPro" id="IPR011527">
    <property type="entry name" value="ABC1_TM_dom"/>
</dbReference>
<dbReference type="InterPro" id="IPR036640">
    <property type="entry name" value="ABC1_TM_sf"/>
</dbReference>
<dbReference type="InterPro" id="IPR003439">
    <property type="entry name" value="ABC_transporter-like_ATP-bd"/>
</dbReference>
<dbReference type="InterPro" id="IPR017871">
    <property type="entry name" value="ABC_transporter-like_CS"/>
</dbReference>
<dbReference type="InterPro" id="IPR027417">
    <property type="entry name" value="P-loop_NTPase"/>
</dbReference>
<dbReference type="InterPro" id="IPR039421">
    <property type="entry name" value="Type_1_exporter"/>
</dbReference>
<dbReference type="PANTHER" id="PTHR43394:SF1">
    <property type="entry name" value="ATP-BINDING CASSETTE SUB-FAMILY B MEMBER 10, MITOCHONDRIAL"/>
    <property type="match status" value="1"/>
</dbReference>
<dbReference type="PANTHER" id="PTHR43394">
    <property type="entry name" value="ATP-DEPENDENT PERMEASE MDL1, MITOCHONDRIAL"/>
    <property type="match status" value="1"/>
</dbReference>
<dbReference type="Pfam" id="PF00664">
    <property type="entry name" value="ABC_membrane"/>
    <property type="match status" value="1"/>
</dbReference>
<dbReference type="Pfam" id="PF00005">
    <property type="entry name" value="ABC_tran"/>
    <property type="match status" value="1"/>
</dbReference>
<dbReference type="PRINTS" id="PR01896">
    <property type="entry name" value="TAP1PROTEIN"/>
</dbReference>
<dbReference type="SMART" id="SM00382">
    <property type="entry name" value="AAA"/>
    <property type="match status" value="1"/>
</dbReference>
<dbReference type="SUPFAM" id="SSF90123">
    <property type="entry name" value="ABC transporter transmembrane region"/>
    <property type="match status" value="1"/>
</dbReference>
<dbReference type="SUPFAM" id="SSF52540">
    <property type="entry name" value="P-loop containing nucleoside triphosphate hydrolases"/>
    <property type="match status" value="1"/>
</dbReference>
<dbReference type="PROSITE" id="PS50929">
    <property type="entry name" value="ABC_TM1F"/>
    <property type="match status" value="1"/>
</dbReference>
<dbReference type="PROSITE" id="PS00211">
    <property type="entry name" value="ABC_TRANSPORTER_1"/>
    <property type="match status" value="1"/>
</dbReference>
<dbReference type="PROSITE" id="PS50893">
    <property type="entry name" value="ABC_TRANSPORTER_2"/>
    <property type="match status" value="1"/>
</dbReference>
<feature type="chain" id="PRO_0000093140" description="Uncharacterized ABC transporter ATP-binding protein YfiB">
    <location>
        <begin position="1"/>
        <end position="573"/>
    </location>
</feature>
<feature type="transmembrane region" description="Helical" evidence="2">
    <location>
        <begin position="17"/>
        <end position="37"/>
    </location>
</feature>
<feature type="transmembrane region" description="Helical" evidence="2">
    <location>
        <begin position="52"/>
        <end position="72"/>
    </location>
</feature>
<feature type="transmembrane region" description="Helical" evidence="2">
    <location>
        <begin position="127"/>
        <end position="147"/>
    </location>
</feature>
<feature type="transmembrane region" description="Helical" evidence="2">
    <location>
        <begin position="153"/>
        <end position="173"/>
    </location>
</feature>
<feature type="transmembrane region" description="Helical" evidence="2">
    <location>
        <begin position="238"/>
        <end position="258"/>
    </location>
</feature>
<feature type="transmembrane region" description="Helical" evidence="2">
    <location>
        <begin position="275"/>
        <end position="295"/>
    </location>
</feature>
<feature type="domain" description="ABC transmembrane type-1" evidence="2">
    <location>
        <begin position="15"/>
        <end position="298"/>
    </location>
</feature>
<feature type="domain" description="ABC transporter" evidence="1">
    <location>
        <begin position="330"/>
        <end position="563"/>
    </location>
</feature>
<feature type="binding site" evidence="1">
    <location>
        <begin position="364"/>
        <end position="371"/>
    </location>
    <ligand>
        <name>ATP</name>
        <dbReference type="ChEBI" id="CHEBI:30616"/>
    </ligand>
</feature>
<gene>
    <name type="primary">yfiB</name>
    <name type="ordered locus">BSU08210</name>
</gene>
<accession>P54718</accession>
<reference key="1">
    <citation type="journal article" date="1996" name="Microbiology">
        <title>Determination of a 12 kb nucleotide sequence around the 76 degrees region of the Bacillus subtilis chromosome.</title>
        <authorList>
            <person name="Yamamoto H."/>
            <person name="Uchiyama S."/>
            <person name="Fajar A.N."/>
            <person name="Ogasawara N."/>
            <person name="Sekiguchi J."/>
        </authorList>
    </citation>
    <scope>NUCLEOTIDE SEQUENCE [GENOMIC DNA]</scope>
    <source>
        <strain>168</strain>
    </source>
</reference>
<reference key="2">
    <citation type="journal article" date="1997" name="Nature">
        <title>The complete genome sequence of the Gram-positive bacterium Bacillus subtilis.</title>
        <authorList>
            <person name="Kunst F."/>
            <person name="Ogasawara N."/>
            <person name="Moszer I."/>
            <person name="Albertini A.M."/>
            <person name="Alloni G."/>
            <person name="Azevedo V."/>
            <person name="Bertero M.G."/>
            <person name="Bessieres P."/>
            <person name="Bolotin A."/>
            <person name="Borchert S."/>
            <person name="Borriss R."/>
            <person name="Boursier L."/>
            <person name="Brans A."/>
            <person name="Braun M."/>
            <person name="Brignell S.C."/>
            <person name="Bron S."/>
            <person name="Brouillet S."/>
            <person name="Bruschi C.V."/>
            <person name="Caldwell B."/>
            <person name="Capuano V."/>
            <person name="Carter N.M."/>
            <person name="Choi S.-K."/>
            <person name="Codani J.-J."/>
            <person name="Connerton I.F."/>
            <person name="Cummings N.J."/>
            <person name="Daniel R.A."/>
            <person name="Denizot F."/>
            <person name="Devine K.M."/>
            <person name="Duesterhoeft A."/>
            <person name="Ehrlich S.D."/>
            <person name="Emmerson P.T."/>
            <person name="Entian K.-D."/>
            <person name="Errington J."/>
            <person name="Fabret C."/>
            <person name="Ferrari E."/>
            <person name="Foulger D."/>
            <person name="Fritz C."/>
            <person name="Fujita M."/>
            <person name="Fujita Y."/>
            <person name="Fuma S."/>
            <person name="Galizzi A."/>
            <person name="Galleron N."/>
            <person name="Ghim S.-Y."/>
            <person name="Glaser P."/>
            <person name="Goffeau A."/>
            <person name="Golightly E.J."/>
            <person name="Grandi G."/>
            <person name="Guiseppi G."/>
            <person name="Guy B.J."/>
            <person name="Haga K."/>
            <person name="Haiech J."/>
            <person name="Harwood C.R."/>
            <person name="Henaut A."/>
            <person name="Hilbert H."/>
            <person name="Holsappel S."/>
            <person name="Hosono S."/>
            <person name="Hullo M.-F."/>
            <person name="Itaya M."/>
            <person name="Jones L.-M."/>
            <person name="Joris B."/>
            <person name="Karamata D."/>
            <person name="Kasahara Y."/>
            <person name="Klaerr-Blanchard M."/>
            <person name="Klein C."/>
            <person name="Kobayashi Y."/>
            <person name="Koetter P."/>
            <person name="Koningstein G."/>
            <person name="Krogh S."/>
            <person name="Kumano M."/>
            <person name="Kurita K."/>
            <person name="Lapidus A."/>
            <person name="Lardinois S."/>
            <person name="Lauber J."/>
            <person name="Lazarevic V."/>
            <person name="Lee S.-M."/>
            <person name="Levine A."/>
            <person name="Liu H."/>
            <person name="Masuda S."/>
            <person name="Mauel C."/>
            <person name="Medigue C."/>
            <person name="Medina N."/>
            <person name="Mellado R.P."/>
            <person name="Mizuno M."/>
            <person name="Moestl D."/>
            <person name="Nakai S."/>
            <person name="Noback M."/>
            <person name="Noone D."/>
            <person name="O'Reilly M."/>
            <person name="Ogawa K."/>
            <person name="Ogiwara A."/>
            <person name="Oudega B."/>
            <person name="Park S.-H."/>
            <person name="Parro V."/>
            <person name="Pohl T.M."/>
            <person name="Portetelle D."/>
            <person name="Porwollik S."/>
            <person name="Prescott A.M."/>
            <person name="Presecan E."/>
            <person name="Pujic P."/>
            <person name="Purnelle B."/>
            <person name="Rapoport G."/>
            <person name="Rey M."/>
            <person name="Reynolds S."/>
            <person name="Rieger M."/>
            <person name="Rivolta C."/>
            <person name="Rocha E."/>
            <person name="Roche B."/>
            <person name="Rose M."/>
            <person name="Sadaie Y."/>
            <person name="Sato T."/>
            <person name="Scanlan E."/>
            <person name="Schleich S."/>
            <person name="Schroeter R."/>
            <person name="Scoffone F."/>
            <person name="Sekiguchi J."/>
            <person name="Sekowska A."/>
            <person name="Seror S.J."/>
            <person name="Serror P."/>
            <person name="Shin B.-S."/>
            <person name="Soldo B."/>
            <person name="Sorokin A."/>
            <person name="Tacconi E."/>
            <person name="Takagi T."/>
            <person name="Takahashi H."/>
            <person name="Takemaru K."/>
            <person name="Takeuchi M."/>
            <person name="Tamakoshi A."/>
            <person name="Tanaka T."/>
            <person name="Terpstra P."/>
            <person name="Tognoni A."/>
            <person name="Tosato V."/>
            <person name="Uchiyama S."/>
            <person name="Vandenbol M."/>
            <person name="Vannier F."/>
            <person name="Vassarotti A."/>
            <person name="Viari A."/>
            <person name="Wambutt R."/>
            <person name="Wedler E."/>
            <person name="Wedler H."/>
            <person name="Weitzenegger T."/>
            <person name="Winters P."/>
            <person name="Wipat A."/>
            <person name="Yamamoto H."/>
            <person name="Yamane K."/>
            <person name="Yasumoto K."/>
            <person name="Yata K."/>
            <person name="Yoshida K."/>
            <person name="Yoshikawa H.-F."/>
            <person name="Zumstein E."/>
            <person name="Yoshikawa H."/>
            <person name="Danchin A."/>
        </authorList>
    </citation>
    <scope>NUCLEOTIDE SEQUENCE [LARGE SCALE GENOMIC DNA]</scope>
    <source>
        <strain>168</strain>
    </source>
</reference>